<protein>
    <recommendedName>
        <fullName evidence="1">Alpha-amylase 3</fullName>
        <ecNumber>3.2.1.1</ecNumber>
    </recommendedName>
    <alternativeName>
        <fullName evidence="1">1,4-alpha-D-glucan glucanohydrolase</fullName>
    </alternativeName>
</protein>
<sequence length="14" mass="1543">GIYCIFEGGTPDDR</sequence>
<reference evidence="3" key="1">
    <citation type="submission" date="2008-07" db="UniProtKB">
        <authorList>
            <person name="Sabater Jara A.B."/>
            <person name="Almagro L."/>
            <person name="Pedreno M.A."/>
        </authorList>
    </citation>
    <scope>PROTEIN SEQUENCE</scope>
</reference>
<accession>P86089</accession>
<keyword id="KW-0106">Calcium</keyword>
<keyword id="KW-0119">Carbohydrate metabolism</keyword>
<keyword id="KW-0903">Direct protein sequencing</keyword>
<keyword id="KW-0326">Glycosidase</keyword>
<keyword id="KW-0378">Hydrolase</keyword>
<keyword id="KW-0479">Metal-binding</keyword>
<comment type="catalytic activity">
    <reaction>
        <text>Endohydrolysis of (1-&gt;4)-alpha-D-glucosidic linkages in polysaccharides containing three or more (1-&gt;4)-alpha-linked D-glucose units.</text>
        <dbReference type="EC" id="3.2.1.1"/>
    </reaction>
</comment>
<comment type="cofactor">
    <cofactor evidence="1">
        <name>Ca(2+)</name>
        <dbReference type="ChEBI" id="CHEBI:29108"/>
    </cofactor>
    <text evidence="1">Binds 3 Ca(2+) ions per subunit.</text>
</comment>
<comment type="subunit">
    <text evidence="1">Monomer.</text>
</comment>
<comment type="similarity">
    <text evidence="2">Belongs to the glycosyl hydrolase 13 family.</text>
</comment>
<proteinExistence type="evidence at protein level"/>
<evidence type="ECO:0000250" key="1">
    <source>
        <dbReference type="UniProtKB" id="P04063"/>
    </source>
</evidence>
<evidence type="ECO:0000255" key="2"/>
<evidence type="ECO:0000305" key="3"/>
<organism>
    <name type="scientific">Capsicum chinense</name>
    <name type="common">Scotch bonnet</name>
    <name type="synonym">Bonnet pepper</name>
    <dbReference type="NCBI Taxonomy" id="80379"/>
    <lineage>
        <taxon>Eukaryota</taxon>
        <taxon>Viridiplantae</taxon>
        <taxon>Streptophyta</taxon>
        <taxon>Embryophyta</taxon>
        <taxon>Tracheophyta</taxon>
        <taxon>Spermatophyta</taxon>
        <taxon>Magnoliopsida</taxon>
        <taxon>eudicotyledons</taxon>
        <taxon>Gunneridae</taxon>
        <taxon>Pentapetalae</taxon>
        <taxon>asterids</taxon>
        <taxon>lamiids</taxon>
        <taxon>Solanales</taxon>
        <taxon>Solanaceae</taxon>
        <taxon>Solanoideae</taxon>
        <taxon>Capsiceae</taxon>
        <taxon>Capsicum</taxon>
    </lineage>
</organism>
<dbReference type="EC" id="3.2.1.1"/>
<dbReference type="GO" id="GO:0004556">
    <property type="term" value="F:alpha-amylase activity"/>
    <property type="evidence" value="ECO:0007669"/>
    <property type="project" value="UniProtKB-EC"/>
</dbReference>
<dbReference type="GO" id="GO:0046872">
    <property type="term" value="F:metal ion binding"/>
    <property type="evidence" value="ECO:0007669"/>
    <property type="project" value="UniProtKB-KW"/>
</dbReference>
<feature type="chain" id="PRO_0000362985" description="Alpha-amylase 3">
    <location>
        <begin position="1" status="less than"/>
        <end position="14" status="greater than"/>
    </location>
</feature>
<feature type="binding site" evidence="1">
    <location>
        <position position="7"/>
    </location>
    <ligand>
        <name>Ca(2+)</name>
        <dbReference type="ChEBI" id="CHEBI:29108"/>
        <label>2</label>
    </ligand>
</feature>
<feature type="binding site" evidence="1">
    <location>
        <position position="10"/>
    </location>
    <ligand>
        <name>Ca(2+)</name>
        <dbReference type="ChEBI" id="CHEBI:29108"/>
        <label>2</label>
    </ligand>
</feature>
<feature type="binding site" evidence="1">
    <location>
        <position position="12"/>
    </location>
    <ligand>
        <name>Ca(2+)</name>
        <dbReference type="ChEBI" id="CHEBI:29108"/>
        <label>2</label>
    </ligand>
</feature>
<feature type="unsure residue" description="I or L">
    <location>
        <position position="2"/>
    </location>
</feature>
<feature type="unsure residue" description="I or L">
    <location>
        <position position="5"/>
    </location>
</feature>
<feature type="unsure residue" description="F or M">
    <location>
        <position position="6"/>
    </location>
</feature>
<feature type="non-terminal residue">
    <location>
        <position position="1"/>
    </location>
</feature>
<feature type="non-terminal residue">
    <location>
        <position position="14"/>
    </location>
</feature>
<name>AMY3_CAPCH</name>